<name>ADA2C_DIDVI</name>
<sequence length="469" mass="53223">MDLQLTTNSTDSGDRGGSSNESLQRQPPSQYSPAEVAGLAAVVSFLIVFTIVGNVLVVIAVLTSRALKAPQNLFQVSLASADILVATLVMPFSLANELMNYWYFGKVWCVIYLALDVLFCTSSIVHLCAISLDRYWSVTQAVEYNLKRTPRRIKGIIVTVWLISAVISFPPLISLYRDPEDDLYPQCELNDETWYILSSCIGSFFAPCIIMVLVYVRIYRVAKLRTRTLSEKRTVPEGSSQTENGLSRPPVGAGPSTAAAAAASLRLQAGENGHYHLHHHHHHLHHHHHHHHHQLRKSAELEDIELEESSTSENRRRRRSREEAAARKGSRGFSFSFSSTKGGQSAGAGSRLSRASNRSLEFFSTHRRRKRSSLCRRKVTQAREKRFTFVLAVVMGVFVVCWFPFFFTYSLYGICREACQVPETLFKFFFWIGYCNSSLNPVIYTIFNQDFRRSFKHILFKKKKKTSLQ</sequence>
<protein>
    <recommendedName>
        <fullName>Alpha-2C adrenergic receptor</fullName>
    </recommendedName>
    <alternativeName>
        <fullName>Alpha-2C adrenoreceptor</fullName>
        <shortName>Alpha-2C adrenoceptor</shortName>
        <shortName>Alpha-2CAR</shortName>
    </alternativeName>
</protein>
<accession>P35405</accession>
<proteinExistence type="evidence at transcript level"/>
<feature type="chain" id="PRO_0000069104" description="Alpha-2C adrenergic receptor">
    <location>
        <begin position="1"/>
        <end position="469"/>
    </location>
</feature>
<feature type="topological domain" description="Extracellular" evidence="1">
    <location>
        <begin position="1"/>
        <end position="36"/>
    </location>
</feature>
<feature type="transmembrane region" description="Helical; Name=1" evidence="1">
    <location>
        <begin position="37"/>
        <end position="62"/>
    </location>
</feature>
<feature type="topological domain" description="Cytoplasmic" evidence="1">
    <location>
        <begin position="63"/>
        <end position="73"/>
    </location>
</feature>
<feature type="transmembrane region" description="Helical; Name=2" evidence="1">
    <location>
        <begin position="74"/>
        <end position="99"/>
    </location>
</feature>
<feature type="topological domain" description="Extracellular" evidence="1">
    <location>
        <begin position="100"/>
        <end position="109"/>
    </location>
</feature>
<feature type="transmembrane region" description="Helical; Name=3" evidence="1">
    <location>
        <begin position="110"/>
        <end position="132"/>
    </location>
</feature>
<feature type="topological domain" description="Cytoplasmic" evidence="1">
    <location>
        <begin position="133"/>
        <end position="154"/>
    </location>
</feature>
<feature type="transmembrane region" description="Helical; Name=4" evidence="1">
    <location>
        <begin position="155"/>
        <end position="175"/>
    </location>
</feature>
<feature type="topological domain" description="Extracellular" evidence="1">
    <location>
        <begin position="176"/>
        <end position="194"/>
    </location>
</feature>
<feature type="transmembrane region" description="Helical; Name=5" evidence="1">
    <location>
        <begin position="195"/>
        <end position="216"/>
    </location>
</feature>
<feature type="topological domain" description="Cytoplasmic" evidence="1">
    <location>
        <begin position="217"/>
        <end position="386"/>
    </location>
</feature>
<feature type="transmembrane region" description="Helical; Name=6" evidence="1">
    <location>
        <begin position="387"/>
        <end position="407"/>
    </location>
</feature>
<feature type="topological domain" description="Extracellular" evidence="1">
    <location>
        <begin position="408"/>
        <end position="427"/>
    </location>
</feature>
<feature type="transmembrane region" description="Helical; Name=7" evidence="1">
    <location>
        <begin position="428"/>
        <end position="448"/>
    </location>
</feature>
<feature type="topological domain" description="Cytoplasmic" evidence="1">
    <location>
        <begin position="449"/>
        <end position="469"/>
    </location>
</feature>
<feature type="region of interest" description="Disordered" evidence="4">
    <location>
        <begin position="1"/>
        <end position="29"/>
    </location>
</feature>
<feature type="region of interest" description="Disordered" evidence="4">
    <location>
        <begin position="232"/>
        <end position="261"/>
    </location>
</feature>
<feature type="region of interest" description="Disordered" evidence="4">
    <location>
        <begin position="279"/>
        <end position="353"/>
    </location>
</feature>
<feature type="compositionally biased region" description="Basic residues" evidence="4">
    <location>
        <begin position="279"/>
        <end position="296"/>
    </location>
</feature>
<feature type="compositionally biased region" description="Acidic residues" evidence="4">
    <location>
        <begin position="301"/>
        <end position="310"/>
    </location>
</feature>
<feature type="compositionally biased region" description="Low complexity" evidence="4">
    <location>
        <begin position="331"/>
        <end position="353"/>
    </location>
</feature>
<feature type="site" description="Implicated in ligand binding" evidence="1">
    <location>
        <position position="116"/>
    </location>
</feature>
<feature type="site" description="Implicated in catechol agonist binding and receptor activation" evidence="1">
    <location>
        <position position="199"/>
    </location>
</feature>
<feature type="site" description="Implicated in catechol agonist binding and receptor activation" evidence="1">
    <location>
        <position position="203"/>
    </location>
</feature>
<feature type="glycosylation site" description="N-linked (GlcNAc...) asparagine" evidence="2">
    <location>
        <position position="8"/>
    </location>
</feature>
<feature type="glycosylation site" description="N-linked (GlcNAc...) asparagine" evidence="2">
    <location>
        <position position="20"/>
    </location>
</feature>
<feature type="disulfide bond" evidence="3">
    <location>
        <begin position="109"/>
        <end position="187"/>
    </location>
</feature>
<reference key="1">
    <citation type="journal article" date="1994" name="Mol. Pharmacol.">
        <title>Cloning and expression of the alpha 2C-adrenergic receptor from the OK cell line.</title>
        <authorList>
            <person name="Blaxall H.S."/>
            <person name="Cerutis D."/>
            <person name="Hass N.A."/>
            <person name="Iversen L.J."/>
            <person name="Bylund D.B."/>
        </authorList>
    </citation>
    <scope>NUCLEOTIDE SEQUENCE [MRNA]</scope>
    <source>
        <tissue>Kidney</tissue>
    </source>
</reference>
<reference key="2">
    <citation type="submission" date="2001-12" db="EMBL/GenBank/DDBJ databases">
        <authorList>
            <person name="Bylund D.B."/>
        </authorList>
    </citation>
    <scope>SEQUENCE REVISION TO 60; 75; 110; 143; 326-332; 365 AND 432</scope>
</reference>
<comment type="function">
    <text>Alpha-2 adrenergic receptors mediate the catecholamine-induced inhibition of adenylate cyclase through the action of G proteins.</text>
</comment>
<comment type="subcellular location">
    <subcellularLocation>
        <location>Cell membrane</location>
        <topology>Multi-pass membrane protein</topology>
    </subcellularLocation>
</comment>
<comment type="similarity">
    <text evidence="3">Belongs to the G-protein coupled receptor 1 family. Adrenergic receptor subfamily. ADRA2C sub-subfamily.</text>
</comment>
<gene>
    <name type="primary">ADRA2C</name>
</gene>
<evidence type="ECO:0000250" key="1"/>
<evidence type="ECO:0000255" key="2"/>
<evidence type="ECO:0000255" key="3">
    <source>
        <dbReference type="PROSITE-ProRule" id="PRU00521"/>
    </source>
</evidence>
<evidence type="ECO:0000256" key="4">
    <source>
        <dbReference type="SAM" id="MobiDB-lite"/>
    </source>
</evidence>
<keyword id="KW-1003">Cell membrane</keyword>
<keyword id="KW-1015">Disulfide bond</keyword>
<keyword id="KW-0297">G-protein coupled receptor</keyword>
<keyword id="KW-0325">Glycoprotein</keyword>
<keyword id="KW-0472">Membrane</keyword>
<keyword id="KW-0675">Receptor</keyword>
<keyword id="KW-0807">Transducer</keyword>
<keyword id="KW-0812">Transmembrane</keyword>
<keyword id="KW-1133">Transmembrane helix</keyword>
<organism>
    <name type="scientific">Didelphis virginiana</name>
    <name type="common">North American opossum</name>
    <name type="synonym">Didelphis marsupialis virginiana</name>
    <dbReference type="NCBI Taxonomy" id="9267"/>
    <lineage>
        <taxon>Eukaryota</taxon>
        <taxon>Metazoa</taxon>
        <taxon>Chordata</taxon>
        <taxon>Craniata</taxon>
        <taxon>Vertebrata</taxon>
        <taxon>Euteleostomi</taxon>
        <taxon>Mammalia</taxon>
        <taxon>Metatheria</taxon>
        <taxon>Didelphimorphia</taxon>
        <taxon>Didelphidae</taxon>
        <taxon>Didelphis</taxon>
    </lineage>
</organism>
<dbReference type="EMBL" id="U04310">
    <property type="protein sequence ID" value="AAA17566.2"/>
    <property type="molecule type" value="mRNA"/>
</dbReference>
<dbReference type="SMR" id="P35405"/>
<dbReference type="BindingDB" id="P35405"/>
<dbReference type="GlyCosmos" id="P35405">
    <property type="glycosylation" value="2 sites, No reported glycans"/>
</dbReference>
<dbReference type="GO" id="GO:0005886">
    <property type="term" value="C:plasma membrane"/>
    <property type="evidence" value="ECO:0007669"/>
    <property type="project" value="UniProtKB-SubCell"/>
</dbReference>
<dbReference type="GO" id="GO:0004938">
    <property type="term" value="F:alpha2-adrenergic receptor activity"/>
    <property type="evidence" value="ECO:0007669"/>
    <property type="project" value="InterPro"/>
</dbReference>
<dbReference type="GO" id="GO:0051379">
    <property type="term" value="F:epinephrine binding"/>
    <property type="evidence" value="ECO:0007669"/>
    <property type="project" value="TreeGrafter"/>
</dbReference>
<dbReference type="GO" id="GO:0030168">
    <property type="term" value="P:platelet activation"/>
    <property type="evidence" value="ECO:0007669"/>
    <property type="project" value="InterPro"/>
</dbReference>
<dbReference type="GO" id="GO:0006940">
    <property type="term" value="P:regulation of smooth muscle contraction"/>
    <property type="evidence" value="ECO:0007669"/>
    <property type="project" value="InterPro"/>
</dbReference>
<dbReference type="GO" id="GO:0019229">
    <property type="term" value="P:regulation of vasoconstriction"/>
    <property type="evidence" value="ECO:0007669"/>
    <property type="project" value="InterPro"/>
</dbReference>
<dbReference type="CDD" id="cd15323">
    <property type="entry name" value="7tmA_alpha2C_AR"/>
    <property type="match status" value="1"/>
</dbReference>
<dbReference type="FunFam" id="1.20.1070.10:FF:000100">
    <property type="entry name" value="alpha-2B adrenergic receptor"/>
    <property type="match status" value="1"/>
</dbReference>
<dbReference type="FunFam" id="1.20.1070.10:FF:000245">
    <property type="entry name" value="Alpha-2C adrenergic receptor"/>
    <property type="match status" value="1"/>
</dbReference>
<dbReference type="Gene3D" id="1.20.1070.10">
    <property type="entry name" value="Rhodopsin 7-helix transmembrane proteins"/>
    <property type="match status" value="2"/>
</dbReference>
<dbReference type="InterPro" id="IPR002233">
    <property type="entry name" value="ADR_fam"/>
</dbReference>
<dbReference type="InterPro" id="IPR000735">
    <property type="entry name" value="ADRA2C_rcpt"/>
</dbReference>
<dbReference type="InterPro" id="IPR000276">
    <property type="entry name" value="GPCR_Rhodpsn"/>
</dbReference>
<dbReference type="InterPro" id="IPR017452">
    <property type="entry name" value="GPCR_Rhodpsn_7TM"/>
</dbReference>
<dbReference type="PANTHER" id="PTHR24248">
    <property type="entry name" value="ADRENERGIC RECEPTOR-RELATED G-PROTEIN COUPLED RECEPTOR"/>
    <property type="match status" value="1"/>
</dbReference>
<dbReference type="PANTHER" id="PTHR24248:SF25">
    <property type="entry name" value="ALPHA-2C ADRENERGIC RECEPTOR"/>
    <property type="match status" value="1"/>
</dbReference>
<dbReference type="Pfam" id="PF00001">
    <property type="entry name" value="7tm_1"/>
    <property type="match status" value="1"/>
</dbReference>
<dbReference type="PRINTS" id="PR01103">
    <property type="entry name" value="ADRENERGICR"/>
</dbReference>
<dbReference type="PRINTS" id="PR00560">
    <property type="entry name" value="ADRENRGCA2CR"/>
</dbReference>
<dbReference type="PRINTS" id="PR00237">
    <property type="entry name" value="GPCRRHODOPSN"/>
</dbReference>
<dbReference type="SMART" id="SM01381">
    <property type="entry name" value="7TM_GPCR_Srsx"/>
    <property type="match status" value="1"/>
</dbReference>
<dbReference type="SUPFAM" id="SSF81321">
    <property type="entry name" value="Family A G protein-coupled receptor-like"/>
    <property type="match status" value="1"/>
</dbReference>
<dbReference type="PROSITE" id="PS00237">
    <property type="entry name" value="G_PROTEIN_RECEP_F1_1"/>
    <property type="match status" value="1"/>
</dbReference>
<dbReference type="PROSITE" id="PS50262">
    <property type="entry name" value="G_PROTEIN_RECEP_F1_2"/>
    <property type="match status" value="1"/>
</dbReference>